<comment type="function">
    <text evidence="1">In the cytoplasm, catalyzes the conversion of glucose-6-phosphate to fructose-6-phosphate, the second step in glycolysis, and the reverse reaction during gluconeogenesis.</text>
</comment>
<comment type="catalytic activity">
    <reaction evidence="1">
        <text>alpha-D-glucose 6-phosphate = beta-D-fructose 6-phosphate</text>
        <dbReference type="Rhea" id="RHEA:11816"/>
        <dbReference type="ChEBI" id="CHEBI:57634"/>
        <dbReference type="ChEBI" id="CHEBI:58225"/>
        <dbReference type="EC" id="5.3.1.9"/>
    </reaction>
</comment>
<comment type="pathway">
    <text evidence="5">Carbohydrate degradation; glycolysis; D-glyceraldehyde 3-phosphate and glycerone phosphate from D-glucose: step 2/4.</text>
</comment>
<comment type="subunit">
    <text evidence="1">Homodimer.</text>
</comment>
<comment type="subcellular location">
    <subcellularLocation>
        <location evidence="3">Cytoplasm</location>
        <location evidence="3">Cytosol</location>
    </subcellularLocation>
</comment>
<comment type="similarity">
    <text evidence="5">Belongs to the GPI family.</text>
</comment>
<protein>
    <recommendedName>
        <fullName>Glucose-6-phosphate isomerase</fullName>
        <shortName>GPI</shortName>
        <ecNumber evidence="1">5.3.1.9</ecNumber>
    </recommendedName>
    <alternativeName>
        <fullName>Phosphoglucose isomerase</fullName>
        <shortName>PGI</shortName>
    </alternativeName>
    <alternativeName>
        <fullName>Phosphohexose isomerase</fullName>
        <shortName>PHI</shortName>
    </alternativeName>
</protein>
<sequence length="550" mass="60884">MSFSLASTLPAWQAVQTHYESVGKHLVLKELFAKDSSRFEKFSFTFNGLKEEDGPILFDFSKNLITEETVELLVKLAKEANVEGLRDALFAGEHINFTEDRAVFHPALRNVSEKPMKVNGQDVMPGVRKVLRHMKEFSDAVRSGAWKGYTGKPIKSIVNVGIGGSDLGPVMVTEALKPYGQENLELHFVSNIDGTHLAEALKKCDPETTLFLIASKTFTTAETCTNAKSAKDWFLASAKDPSHVAKHFVALSTNEKEVTAFGISAQNMFEFSDWVGGRYSVWSAIGLSVALYIGYENFEAFLSGAHAMDEYFCSTPLEKNIPALAALISIWYSDFFGAQTHLVAPYDQYLHRFPAYLQQLSMESNGKAITRSGDMVNYTTGKILWGEPGTNSQHSFFQLIHQGTKLIPADFLIPIESHNPIDNNKHHRMLFSNFAAQTEALMLGKTPAEVKAEGTPDEIVPHKTFVGNRPSNSIIAKKITPASLGALIAFYEWVTFTEGAVWNINSFDQFGVELGKKLAKNVLAQLETKGDVENHDSSTNGLINLFKNGF</sequence>
<dbReference type="EC" id="5.3.1.9" evidence="1"/>
<dbReference type="EMBL" id="D89268">
    <property type="protein sequence ID" value="BAA13929.1"/>
    <property type="molecule type" value="mRNA"/>
</dbReference>
<dbReference type="EMBL" id="CU329671">
    <property type="protein sequence ID" value="CAA22338.1"/>
    <property type="molecule type" value="Genomic_DNA"/>
</dbReference>
<dbReference type="PIR" id="T39509">
    <property type="entry name" value="T39509"/>
</dbReference>
<dbReference type="PIR" id="T43196">
    <property type="entry name" value="T43196"/>
</dbReference>
<dbReference type="RefSeq" id="NP_596635.1">
    <property type="nucleotide sequence ID" value="NM_001022556.2"/>
</dbReference>
<dbReference type="SMR" id="P78917"/>
<dbReference type="BioGRID" id="276182">
    <property type="interactions" value="2"/>
</dbReference>
<dbReference type="FunCoup" id="P78917">
    <property type="interactions" value="575"/>
</dbReference>
<dbReference type="STRING" id="284812.P78917"/>
<dbReference type="iPTMnet" id="P78917"/>
<dbReference type="PaxDb" id="4896-SPBC1604.05.1"/>
<dbReference type="EnsemblFungi" id="SPBC1604.05.1">
    <property type="protein sequence ID" value="SPBC1604.05.1:pep"/>
    <property type="gene ID" value="SPBC1604.05"/>
</dbReference>
<dbReference type="GeneID" id="2539625"/>
<dbReference type="KEGG" id="spo:2539625"/>
<dbReference type="PomBase" id="SPBC1604.05">
    <property type="gene designation" value="pgi1"/>
</dbReference>
<dbReference type="VEuPathDB" id="FungiDB:SPBC1604.05"/>
<dbReference type="eggNOG" id="KOG2446">
    <property type="taxonomic scope" value="Eukaryota"/>
</dbReference>
<dbReference type="HOGENOM" id="CLU_017947_3_1_1"/>
<dbReference type="InParanoid" id="P78917"/>
<dbReference type="OMA" id="DWYRQLW"/>
<dbReference type="PhylomeDB" id="P78917"/>
<dbReference type="Reactome" id="R-SPO-5628897">
    <property type="pathway name" value="TP53 Regulates Metabolic Genes"/>
</dbReference>
<dbReference type="Reactome" id="R-SPO-6798695">
    <property type="pathway name" value="Neutrophil degranulation"/>
</dbReference>
<dbReference type="Reactome" id="R-SPO-70171">
    <property type="pathway name" value="Glycolysis"/>
</dbReference>
<dbReference type="Reactome" id="R-SPO-70263">
    <property type="pathway name" value="Gluconeogenesis"/>
</dbReference>
<dbReference type="UniPathway" id="UPA00109">
    <property type="reaction ID" value="UER00181"/>
</dbReference>
<dbReference type="PRO" id="PR:P78917"/>
<dbReference type="Proteomes" id="UP000002485">
    <property type="component" value="Chromosome II"/>
</dbReference>
<dbReference type="GO" id="GO:0005829">
    <property type="term" value="C:cytosol"/>
    <property type="evidence" value="ECO:0007005"/>
    <property type="project" value="PomBase"/>
</dbReference>
<dbReference type="GO" id="GO:0097367">
    <property type="term" value="F:carbohydrate derivative binding"/>
    <property type="evidence" value="ECO:0007669"/>
    <property type="project" value="InterPro"/>
</dbReference>
<dbReference type="GO" id="GO:0004347">
    <property type="term" value="F:glucose-6-phosphate isomerase activity"/>
    <property type="evidence" value="ECO:0000318"/>
    <property type="project" value="GO_Central"/>
</dbReference>
<dbReference type="GO" id="GO:0048029">
    <property type="term" value="F:monosaccharide binding"/>
    <property type="evidence" value="ECO:0000318"/>
    <property type="project" value="GO_Central"/>
</dbReference>
<dbReference type="GO" id="GO:0061621">
    <property type="term" value="P:canonical glycolysis"/>
    <property type="evidence" value="ECO:0000250"/>
    <property type="project" value="PomBase"/>
</dbReference>
<dbReference type="GO" id="GO:0006094">
    <property type="term" value="P:gluconeogenesis"/>
    <property type="evidence" value="ECO:0000318"/>
    <property type="project" value="GO_Central"/>
</dbReference>
<dbReference type="GO" id="GO:0051156">
    <property type="term" value="P:glucose 6-phosphate metabolic process"/>
    <property type="evidence" value="ECO:0000318"/>
    <property type="project" value="GO_Central"/>
</dbReference>
<dbReference type="GO" id="GO:0006096">
    <property type="term" value="P:glycolytic process"/>
    <property type="evidence" value="ECO:0000318"/>
    <property type="project" value="GO_Central"/>
</dbReference>
<dbReference type="CDD" id="cd05015">
    <property type="entry name" value="SIS_PGI_1"/>
    <property type="match status" value="1"/>
</dbReference>
<dbReference type="CDD" id="cd05016">
    <property type="entry name" value="SIS_PGI_2"/>
    <property type="match status" value="1"/>
</dbReference>
<dbReference type="FunFam" id="1.10.1390.10:FF:000001">
    <property type="entry name" value="Glucose-6-phosphate isomerase"/>
    <property type="match status" value="1"/>
</dbReference>
<dbReference type="FunFam" id="3.40.50.10490:FF:000004">
    <property type="entry name" value="Glucose-6-phosphate isomerase"/>
    <property type="match status" value="1"/>
</dbReference>
<dbReference type="Gene3D" id="1.10.1390.10">
    <property type="match status" value="1"/>
</dbReference>
<dbReference type="Gene3D" id="3.40.50.10490">
    <property type="entry name" value="Glucose-6-phosphate isomerase like protein, domain 1"/>
    <property type="match status" value="2"/>
</dbReference>
<dbReference type="HAMAP" id="MF_00473">
    <property type="entry name" value="G6P_isomerase"/>
    <property type="match status" value="1"/>
</dbReference>
<dbReference type="InterPro" id="IPR001672">
    <property type="entry name" value="G6P_Isomerase"/>
</dbReference>
<dbReference type="InterPro" id="IPR023096">
    <property type="entry name" value="G6P_Isomerase_C"/>
</dbReference>
<dbReference type="InterPro" id="IPR018189">
    <property type="entry name" value="Phosphoglucose_isomerase_CS"/>
</dbReference>
<dbReference type="InterPro" id="IPR046348">
    <property type="entry name" value="SIS_dom_sf"/>
</dbReference>
<dbReference type="InterPro" id="IPR035476">
    <property type="entry name" value="SIS_PGI_1"/>
</dbReference>
<dbReference type="InterPro" id="IPR035482">
    <property type="entry name" value="SIS_PGI_2"/>
</dbReference>
<dbReference type="NCBIfam" id="NF001211">
    <property type="entry name" value="PRK00179.1"/>
    <property type="match status" value="1"/>
</dbReference>
<dbReference type="PANTHER" id="PTHR11469">
    <property type="entry name" value="GLUCOSE-6-PHOSPHATE ISOMERASE"/>
    <property type="match status" value="1"/>
</dbReference>
<dbReference type="PANTHER" id="PTHR11469:SF1">
    <property type="entry name" value="GLUCOSE-6-PHOSPHATE ISOMERASE"/>
    <property type="match status" value="1"/>
</dbReference>
<dbReference type="Pfam" id="PF00342">
    <property type="entry name" value="PGI"/>
    <property type="match status" value="1"/>
</dbReference>
<dbReference type="PRINTS" id="PR00662">
    <property type="entry name" value="G6PISOMERASE"/>
</dbReference>
<dbReference type="SUPFAM" id="SSF53697">
    <property type="entry name" value="SIS domain"/>
    <property type="match status" value="1"/>
</dbReference>
<dbReference type="PROSITE" id="PS00765">
    <property type="entry name" value="P_GLUCOSE_ISOMERASE_1"/>
    <property type="match status" value="1"/>
</dbReference>
<dbReference type="PROSITE" id="PS00174">
    <property type="entry name" value="P_GLUCOSE_ISOMERASE_2"/>
    <property type="match status" value="1"/>
</dbReference>
<dbReference type="PROSITE" id="PS51463">
    <property type="entry name" value="P_GLUCOSE_ISOMERASE_3"/>
    <property type="match status" value="1"/>
</dbReference>
<evidence type="ECO:0000250" key="1">
    <source>
        <dbReference type="UniProtKB" id="P06744"/>
    </source>
</evidence>
<evidence type="ECO:0000250" key="2">
    <source>
        <dbReference type="UniProtKB" id="P06745"/>
    </source>
</evidence>
<evidence type="ECO:0000269" key="3">
    <source>
    </source>
</evidence>
<evidence type="ECO:0000269" key="4">
    <source>
    </source>
</evidence>
<evidence type="ECO:0000305" key="5"/>
<accession>P78917</accession>
<accession>O94371</accession>
<keyword id="KW-0963">Cytoplasm</keyword>
<keyword id="KW-0312">Gluconeogenesis</keyword>
<keyword id="KW-0324">Glycolysis</keyword>
<keyword id="KW-0413">Isomerase</keyword>
<keyword id="KW-0597">Phosphoprotein</keyword>
<keyword id="KW-1185">Reference proteome</keyword>
<gene>
    <name type="primary">pgi1</name>
    <name type="ORF">SPBC1604.05</name>
</gene>
<proteinExistence type="evidence at protein level"/>
<reference key="1">
    <citation type="journal article" date="1997" name="DNA Res.">
        <title>Identification of open reading frames in Schizosaccharomyces pombe cDNAs.</title>
        <authorList>
            <person name="Yoshioka S."/>
            <person name="Kato K."/>
            <person name="Nakai K."/>
            <person name="Okayama H."/>
            <person name="Nojima H."/>
        </authorList>
    </citation>
    <scope>NUCLEOTIDE SEQUENCE [LARGE SCALE MRNA]</scope>
    <source>
        <strain>PR745</strain>
    </source>
</reference>
<reference key="2">
    <citation type="journal article" date="2002" name="Nature">
        <title>The genome sequence of Schizosaccharomyces pombe.</title>
        <authorList>
            <person name="Wood V."/>
            <person name="Gwilliam R."/>
            <person name="Rajandream M.A."/>
            <person name="Lyne M.H."/>
            <person name="Lyne R."/>
            <person name="Stewart A."/>
            <person name="Sgouros J.G."/>
            <person name="Peat N."/>
            <person name="Hayles J."/>
            <person name="Baker S.G."/>
            <person name="Basham D."/>
            <person name="Bowman S."/>
            <person name="Brooks K."/>
            <person name="Brown D."/>
            <person name="Brown S."/>
            <person name="Chillingworth T."/>
            <person name="Churcher C.M."/>
            <person name="Collins M."/>
            <person name="Connor R."/>
            <person name="Cronin A."/>
            <person name="Davis P."/>
            <person name="Feltwell T."/>
            <person name="Fraser A."/>
            <person name="Gentles S."/>
            <person name="Goble A."/>
            <person name="Hamlin N."/>
            <person name="Harris D.E."/>
            <person name="Hidalgo J."/>
            <person name="Hodgson G."/>
            <person name="Holroyd S."/>
            <person name="Hornsby T."/>
            <person name="Howarth S."/>
            <person name="Huckle E.J."/>
            <person name="Hunt S."/>
            <person name="Jagels K."/>
            <person name="James K.D."/>
            <person name="Jones L."/>
            <person name="Jones M."/>
            <person name="Leather S."/>
            <person name="McDonald S."/>
            <person name="McLean J."/>
            <person name="Mooney P."/>
            <person name="Moule S."/>
            <person name="Mungall K.L."/>
            <person name="Murphy L.D."/>
            <person name="Niblett D."/>
            <person name="Odell C."/>
            <person name="Oliver K."/>
            <person name="O'Neil S."/>
            <person name="Pearson D."/>
            <person name="Quail M.A."/>
            <person name="Rabbinowitsch E."/>
            <person name="Rutherford K.M."/>
            <person name="Rutter S."/>
            <person name="Saunders D."/>
            <person name="Seeger K."/>
            <person name="Sharp S."/>
            <person name="Skelton J."/>
            <person name="Simmonds M.N."/>
            <person name="Squares R."/>
            <person name="Squares S."/>
            <person name="Stevens K."/>
            <person name="Taylor K."/>
            <person name="Taylor R.G."/>
            <person name="Tivey A."/>
            <person name="Walsh S.V."/>
            <person name="Warren T."/>
            <person name="Whitehead S."/>
            <person name="Woodward J.R."/>
            <person name="Volckaert G."/>
            <person name="Aert R."/>
            <person name="Robben J."/>
            <person name="Grymonprez B."/>
            <person name="Weltjens I."/>
            <person name="Vanstreels E."/>
            <person name="Rieger M."/>
            <person name="Schaefer M."/>
            <person name="Mueller-Auer S."/>
            <person name="Gabel C."/>
            <person name="Fuchs M."/>
            <person name="Duesterhoeft A."/>
            <person name="Fritzc C."/>
            <person name="Holzer E."/>
            <person name="Moestl D."/>
            <person name="Hilbert H."/>
            <person name="Borzym K."/>
            <person name="Langer I."/>
            <person name="Beck A."/>
            <person name="Lehrach H."/>
            <person name="Reinhardt R."/>
            <person name="Pohl T.M."/>
            <person name="Eger P."/>
            <person name="Zimmermann W."/>
            <person name="Wedler H."/>
            <person name="Wambutt R."/>
            <person name="Purnelle B."/>
            <person name="Goffeau A."/>
            <person name="Cadieu E."/>
            <person name="Dreano S."/>
            <person name="Gloux S."/>
            <person name="Lelaure V."/>
            <person name="Mottier S."/>
            <person name="Galibert F."/>
            <person name="Aves S.J."/>
            <person name="Xiang Z."/>
            <person name="Hunt C."/>
            <person name="Moore K."/>
            <person name="Hurst S.M."/>
            <person name="Lucas M."/>
            <person name="Rochet M."/>
            <person name="Gaillardin C."/>
            <person name="Tallada V.A."/>
            <person name="Garzon A."/>
            <person name="Thode G."/>
            <person name="Daga R.R."/>
            <person name="Cruzado L."/>
            <person name="Jimenez J."/>
            <person name="Sanchez M."/>
            <person name="del Rey F."/>
            <person name="Benito J."/>
            <person name="Dominguez A."/>
            <person name="Revuelta J.L."/>
            <person name="Moreno S."/>
            <person name="Armstrong J."/>
            <person name="Forsburg S.L."/>
            <person name="Cerutti L."/>
            <person name="Lowe T."/>
            <person name="McCombie W.R."/>
            <person name="Paulsen I."/>
            <person name="Potashkin J."/>
            <person name="Shpakovski G.V."/>
            <person name="Ussery D."/>
            <person name="Barrell B.G."/>
            <person name="Nurse P."/>
        </authorList>
    </citation>
    <scope>NUCLEOTIDE SEQUENCE [LARGE SCALE GENOMIC DNA]</scope>
    <source>
        <strain>972 / ATCC 24843</strain>
    </source>
</reference>
<reference key="3">
    <citation type="journal article" date="2006" name="Nat. Biotechnol.">
        <title>ORFeome cloning and global analysis of protein localization in the fission yeast Schizosaccharomyces pombe.</title>
        <authorList>
            <person name="Matsuyama A."/>
            <person name="Arai R."/>
            <person name="Yashiroda Y."/>
            <person name="Shirai A."/>
            <person name="Kamata A."/>
            <person name="Sekido S."/>
            <person name="Kobayashi Y."/>
            <person name="Hashimoto A."/>
            <person name="Hamamoto M."/>
            <person name="Hiraoka Y."/>
            <person name="Horinouchi S."/>
            <person name="Yoshida M."/>
        </authorList>
    </citation>
    <scope>SUBCELLULAR LOCATION</scope>
</reference>
<reference key="4">
    <citation type="journal article" date="2008" name="J. Proteome Res.">
        <title>Phosphoproteome analysis of fission yeast.</title>
        <authorList>
            <person name="Wilson-Grady J.T."/>
            <person name="Villen J."/>
            <person name="Gygi S.P."/>
        </authorList>
    </citation>
    <scope>PHOSPHORYLATION [LARGE SCALE ANALYSIS] AT THR-455</scope>
    <scope>IDENTIFICATION BY MASS SPECTROMETRY</scope>
</reference>
<feature type="chain" id="PRO_0000180577" description="Glucose-6-phosphate isomerase">
    <location>
        <begin position="1"/>
        <end position="550"/>
    </location>
</feature>
<feature type="active site" description="Proton donor" evidence="1">
    <location>
        <position position="363"/>
    </location>
</feature>
<feature type="active site" evidence="1">
    <location>
        <position position="394"/>
    </location>
</feature>
<feature type="active site" evidence="1">
    <location>
        <position position="516"/>
    </location>
</feature>
<feature type="binding site" evidence="2">
    <location>
        <begin position="164"/>
        <end position="165"/>
    </location>
    <ligand>
        <name>D-glucose 6-phosphate</name>
        <dbReference type="ChEBI" id="CHEBI:61548"/>
    </ligand>
</feature>
<feature type="binding site" evidence="2">
    <location>
        <begin position="215"/>
        <end position="220"/>
    </location>
    <ligand>
        <name>D-glucose 6-phosphate</name>
        <dbReference type="ChEBI" id="CHEBI:61548"/>
    </ligand>
</feature>
<feature type="binding site" evidence="2">
    <location>
        <position position="359"/>
    </location>
    <ligand>
        <name>D-glucose 6-phosphate</name>
        <dbReference type="ChEBI" id="CHEBI:61548"/>
    </ligand>
</feature>
<feature type="binding site" evidence="2">
    <location>
        <position position="363"/>
    </location>
    <ligand>
        <name>D-glucose 6-phosphate</name>
        <dbReference type="ChEBI" id="CHEBI:61548"/>
    </ligand>
</feature>
<feature type="binding site" evidence="2">
    <location>
        <position position="394"/>
    </location>
    <ligand>
        <name>D-glucose 6-phosphate</name>
        <dbReference type="ChEBI" id="CHEBI:61548"/>
    </ligand>
</feature>
<feature type="binding site" evidence="2">
    <location>
        <position position="516"/>
    </location>
    <ligand>
        <name>D-glucose 6-phosphate</name>
        <dbReference type="ChEBI" id="CHEBI:61548"/>
    </ligand>
</feature>
<feature type="modified residue" description="Phosphothreonine" evidence="4">
    <location>
        <position position="455"/>
    </location>
</feature>
<feature type="sequence conflict" description="In Ref. 1; BAA13929." evidence="5" ref="1">
    <original>S</original>
    <variation>C</variation>
    <location>
        <position position="4"/>
    </location>
</feature>
<feature type="sequence conflict" description="In Ref. 1; BAA13929." evidence="5" ref="1">
    <original>QA</original>
    <variation>EV</variation>
    <location>
        <begin position="13"/>
        <end position="14"/>
    </location>
</feature>
<feature type="sequence conflict" description="In Ref. 1; BAA13929." evidence="5" ref="1">
    <original>G</original>
    <variation>A</variation>
    <location>
        <position position="168"/>
    </location>
</feature>
<feature type="sequence conflict" description="In Ref. 1; BAA13929." evidence="5" ref="1">
    <original>A</original>
    <variation>S</variation>
    <location>
        <position position="198"/>
    </location>
</feature>
<feature type="sequence conflict" description="In Ref. 1; BAA13929." evidence="5" ref="1">
    <original>A</original>
    <variation>V</variation>
    <location>
        <position position="519"/>
    </location>
</feature>
<feature type="sequence conflict" description="In Ref. 1; BAA13929." evidence="5" ref="1">
    <original>D</original>
    <variation>Y</variation>
    <location>
        <position position="536"/>
    </location>
</feature>
<name>G6PI_SCHPO</name>
<organism>
    <name type="scientific">Schizosaccharomyces pombe (strain 972 / ATCC 24843)</name>
    <name type="common">Fission yeast</name>
    <dbReference type="NCBI Taxonomy" id="284812"/>
    <lineage>
        <taxon>Eukaryota</taxon>
        <taxon>Fungi</taxon>
        <taxon>Dikarya</taxon>
        <taxon>Ascomycota</taxon>
        <taxon>Taphrinomycotina</taxon>
        <taxon>Schizosaccharomycetes</taxon>
        <taxon>Schizosaccharomycetales</taxon>
        <taxon>Schizosaccharomycetaceae</taxon>
        <taxon>Schizosaccharomyces</taxon>
    </lineage>
</organism>